<name>BBH1A_HOMDU</name>
<evidence type="ECO:0000250" key="1">
    <source>
        <dbReference type="UniProtKB" id="P0C7W7"/>
    </source>
</evidence>
<evidence type="ECO:0000269" key="2">
    <source>
    </source>
</evidence>
<evidence type="ECO:0000303" key="3">
    <source>
    </source>
</evidence>
<evidence type="ECO:0000305" key="4"/>
<feature type="peptide" id="PRO_0000423182" description="U-homostoxin-Hdu1a" evidence="2">
    <location>
        <begin position="1"/>
        <end position="29"/>
    </location>
</feature>
<feature type="glycosylation site" description="O-linked (GlcNAc...) threonine" evidence="2">
    <location>
        <position position="1"/>
    </location>
</feature>
<feature type="disulfide bond" evidence="1">
    <location>
        <begin position="7"/>
        <end position="19"/>
    </location>
</feature>
<feature type="disulfide bond" evidence="1">
    <location>
        <begin position="10"/>
        <end position="25"/>
    </location>
</feature>
<proteinExistence type="evidence at protein level"/>
<keyword id="KW-0903">Direct protein sequencing</keyword>
<keyword id="KW-1015">Disulfide bond</keyword>
<keyword id="KW-0325">Glycoprotein</keyword>
<keyword id="KW-0166">Nematocyst</keyword>
<keyword id="KW-0964">Secreted</keyword>
<keyword id="KW-0800">Toxin</keyword>
<comment type="subcellular location">
    <subcellularLocation>
        <location evidence="2">Secreted</location>
    </subcellularLocation>
    <subcellularLocation>
        <location evidence="1">Nematocyst</location>
    </subcellularLocation>
</comment>
<comment type="mass spectrometry"/>
<comment type="miscellaneous">
    <text evidence="2">Negative results: does not inhibit voltage-gated potassium channels rKv1.1/KCNA1, rKv1.2/KCNA2, rKv1.3/KCNA3, rKv1.4/KCNA4, rKv1.5/KCNA5 rKv1.6/KCNA6, Shaker IR (with inactivation domain removed), rKv2.1/KCNB1, hKv3.1/KCNC1, rKv4.3/KCND3 and hERG.</text>
</comment>
<comment type="similarity">
    <text evidence="4">Belongs to the sea anemone BBH family.</text>
</comment>
<organism>
    <name type="scientific">Homostichanthus duerdeni</name>
    <name type="common">Sea anemone</name>
    <name type="synonym">Stichodactyla duerdeni</name>
    <dbReference type="NCBI Taxonomy" id="1301368"/>
    <lineage>
        <taxon>Eukaryota</taxon>
        <taxon>Metazoa</taxon>
        <taxon>Cnidaria</taxon>
        <taxon>Anthozoa</taxon>
        <taxon>Hexacorallia</taxon>
        <taxon>Actiniaria</taxon>
        <taxon>Homostichanthidae</taxon>
        <taxon>Homostichanthus</taxon>
    </lineage>
</organism>
<protein>
    <recommendedName>
        <fullName evidence="4">U-homostoxin-Hdu1a</fullName>
        <shortName evidence="4">U-HMTX-Hdu1a</shortName>
    </recommendedName>
    <alternativeName>
        <fullName evidence="3">Peptide U-SHTX-Sdd1</fullName>
    </alternativeName>
</protein>
<dbReference type="SMR" id="C0HJB4"/>
<dbReference type="TCDB" id="8.B.15.1.2">
    <property type="family name" value="the sea anemone peptide toxin class 4 (shtx) family"/>
</dbReference>
<dbReference type="iPTMnet" id="C0HJB4"/>
<dbReference type="GO" id="GO:0005576">
    <property type="term" value="C:extracellular region"/>
    <property type="evidence" value="ECO:0007669"/>
    <property type="project" value="UniProtKB-SubCell"/>
</dbReference>
<dbReference type="GO" id="GO:0042151">
    <property type="term" value="C:nematocyst"/>
    <property type="evidence" value="ECO:0007669"/>
    <property type="project" value="UniProtKB-SubCell"/>
</dbReference>
<dbReference type="GO" id="GO:0090729">
    <property type="term" value="F:toxin activity"/>
    <property type="evidence" value="ECO:0007669"/>
    <property type="project" value="UniProtKB-KW"/>
</dbReference>
<reference key="1">
    <citation type="journal article" date="2013" name="J. Proteomics">
        <title>The proteomic profile of Stichodactyla duerdeni secretion reveals the presence of a novel O-linked glycopeptide.</title>
        <authorList>
            <person name="Cassoli J.S."/>
            <person name="Verano-Braga T."/>
            <person name="de Oliveira J.S."/>
            <person name="Montandon G.G."/>
            <person name="Cologna C.T."/>
            <person name="Peigneur S."/>
            <person name="de Castro Pimenta A.M."/>
            <person name="Kjeldsen F."/>
            <person name="Roepstorff P."/>
            <person name="Tytgat J."/>
            <person name="de Lima M.E."/>
        </authorList>
    </citation>
    <scope>PROTEIN SEQUENCE</scope>
    <scope>SUBCELLULAR LOCATION</scope>
    <scope>MASS SPECTROMETRY</scope>
    <scope>GLYCOSYLATION AT THR-1</scope>
</reference>
<accession>C0HJB4</accession>
<sequence>TIIGAPCRKCEHLDRSGNCVRDWSCGQEV</sequence>